<name>ARGB_VEREI</name>
<accession>A1WH89</accession>
<gene>
    <name evidence="1" type="primary">argB</name>
    <name type="ordered locus">Veis_1226</name>
</gene>
<reference key="1">
    <citation type="submission" date="2006-12" db="EMBL/GenBank/DDBJ databases">
        <title>Complete sequence of chromosome 1 of Verminephrobacter eiseniae EF01-2.</title>
        <authorList>
            <person name="Copeland A."/>
            <person name="Lucas S."/>
            <person name="Lapidus A."/>
            <person name="Barry K."/>
            <person name="Detter J.C."/>
            <person name="Glavina del Rio T."/>
            <person name="Dalin E."/>
            <person name="Tice H."/>
            <person name="Pitluck S."/>
            <person name="Chertkov O."/>
            <person name="Brettin T."/>
            <person name="Bruce D."/>
            <person name="Han C."/>
            <person name="Tapia R."/>
            <person name="Gilna P."/>
            <person name="Schmutz J."/>
            <person name="Larimer F."/>
            <person name="Land M."/>
            <person name="Hauser L."/>
            <person name="Kyrpides N."/>
            <person name="Kim E."/>
            <person name="Stahl D."/>
            <person name="Richardson P."/>
        </authorList>
    </citation>
    <scope>NUCLEOTIDE SEQUENCE [LARGE SCALE GENOMIC DNA]</scope>
    <source>
        <strain>EF01-2</strain>
    </source>
</reference>
<organism>
    <name type="scientific">Verminephrobacter eiseniae (strain EF01-2)</name>
    <dbReference type="NCBI Taxonomy" id="391735"/>
    <lineage>
        <taxon>Bacteria</taxon>
        <taxon>Pseudomonadati</taxon>
        <taxon>Pseudomonadota</taxon>
        <taxon>Betaproteobacteria</taxon>
        <taxon>Burkholderiales</taxon>
        <taxon>Comamonadaceae</taxon>
        <taxon>Verminephrobacter</taxon>
    </lineage>
</organism>
<feature type="chain" id="PRO_1000075326" description="Acetylglutamate kinase">
    <location>
        <begin position="1"/>
        <end position="296"/>
    </location>
</feature>
<feature type="binding site" evidence="1">
    <location>
        <begin position="69"/>
        <end position="70"/>
    </location>
    <ligand>
        <name>substrate</name>
    </ligand>
</feature>
<feature type="binding site" evidence="1">
    <location>
        <position position="91"/>
    </location>
    <ligand>
        <name>substrate</name>
    </ligand>
</feature>
<feature type="binding site" evidence="1">
    <location>
        <position position="193"/>
    </location>
    <ligand>
        <name>substrate</name>
    </ligand>
</feature>
<feature type="site" description="Transition state stabilizer" evidence="1">
    <location>
        <position position="34"/>
    </location>
</feature>
<feature type="site" description="Transition state stabilizer" evidence="1">
    <location>
        <position position="253"/>
    </location>
</feature>
<dbReference type="EC" id="2.7.2.8" evidence="1"/>
<dbReference type="EMBL" id="CP000542">
    <property type="protein sequence ID" value="ABM56996.1"/>
    <property type="molecule type" value="Genomic_DNA"/>
</dbReference>
<dbReference type="RefSeq" id="WP_011809007.1">
    <property type="nucleotide sequence ID" value="NC_008786.1"/>
</dbReference>
<dbReference type="SMR" id="A1WH89"/>
<dbReference type="STRING" id="391735.Veis_1226"/>
<dbReference type="GeneID" id="76459877"/>
<dbReference type="KEGG" id="vei:Veis_1226"/>
<dbReference type="eggNOG" id="COG0548">
    <property type="taxonomic scope" value="Bacteria"/>
</dbReference>
<dbReference type="HOGENOM" id="CLU_053680_0_0_4"/>
<dbReference type="OrthoDB" id="9803155at2"/>
<dbReference type="UniPathway" id="UPA00068">
    <property type="reaction ID" value="UER00107"/>
</dbReference>
<dbReference type="Proteomes" id="UP000000374">
    <property type="component" value="Chromosome"/>
</dbReference>
<dbReference type="GO" id="GO:0005737">
    <property type="term" value="C:cytoplasm"/>
    <property type="evidence" value="ECO:0007669"/>
    <property type="project" value="UniProtKB-SubCell"/>
</dbReference>
<dbReference type="GO" id="GO:0003991">
    <property type="term" value="F:acetylglutamate kinase activity"/>
    <property type="evidence" value="ECO:0007669"/>
    <property type="project" value="UniProtKB-UniRule"/>
</dbReference>
<dbReference type="GO" id="GO:0005524">
    <property type="term" value="F:ATP binding"/>
    <property type="evidence" value="ECO:0007669"/>
    <property type="project" value="UniProtKB-UniRule"/>
</dbReference>
<dbReference type="GO" id="GO:0042450">
    <property type="term" value="P:arginine biosynthetic process via ornithine"/>
    <property type="evidence" value="ECO:0007669"/>
    <property type="project" value="UniProtKB-UniRule"/>
</dbReference>
<dbReference type="GO" id="GO:0006526">
    <property type="term" value="P:L-arginine biosynthetic process"/>
    <property type="evidence" value="ECO:0007669"/>
    <property type="project" value="UniProtKB-UniPathway"/>
</dbReference>
<dbReference type="CDD" id="cd04250">
    <property type="entry name" value="AAK_NAGK-C"/>
    <property type="match status" value="1"/>
</dbReference>
<dbReference type="FunFam" id="3.40.1160.10:FF:000004">
    <property type="entry name" value="Acetylglutamate kinase"/>
    <property type="match status" value="1"/>
</dbReference>
<dbReference type="Gene3D" id="3.40.1160.10">
    <property type="entry name" value="Acetylglutamate kinase-like"/>
    <property type="match status" value="1"/>
</dbReference>
<dbReference type="HAMAP" id="MF_00082">
    <property type="entry name" value="ArgB"/>
    <property type="match status" value="1"/>
</dbReference>
<dbReference type="InterPro" id="IPR036393">
    <property type="entry name" value="AceGlu_kinase-like_sf"/>
</dbReference>
<dbReference type="InterPro" id="IPR004662">
    <property type="entry name" value="AcgluKinase_fam"/>
</dbReference>
<dbReference type="InterPro" id="IPR037528">
    <property type="entry name" value="ArgB"/>
</dbReference>
<dbReference type="InterPro" id="IPR001048">
    <property type="entry name" value="Asp/Glu/Uridylate_kinase"/>
</dbReference>
<dbReference type="InterPro" id="IPR001057">
    <property type="entry name" value="Glu/AcGlu_kinase"/>
</dbReference>
<dbReference type="InterPro" id="IPR041727">
    <property type="entry name" value="NAGK-C"/>
</dbReference>
<dbReference type="NCBIfam" id="TIGR00761">
    <property type="entry name" value="argB"/>
    <property type="match status" value="1"/>
</dbReference>
<dbReference type="PANTHER" id="PTHR23342">
    <property type="entry name" value="N-ACETYLGLUTAMATE SYNTHASE"/>
    <property type="match status" value="1"/>
</dbReference>
<dbReference type="PANTHER" id="PTHR23342:SF0">
    <property type="entry name" value="N-ACETYLGLUTAMATE SYNTHASE, MITOCHONDRIAL"/>
    <property type="match status" value="1"/>
</dbReference>
<dbReference type="Pfam" id="PF00696">
    <property type="entry name" value="AA_kinase"/>
    <property type="match status" value="1"/>
</dbReference>
<dbReference type="PIRSF" id="PIRSF000728">
    <property type="entry name" value="NAGK"/>
    <property type="match status" value="1"/>
</dbReference>
<dbReference type="PRINTS" id="PR00474">
    <property type="entry name" value="GLU5KINASE"/>
</dbReference>
<dbReference type="SUPFAM" id="SSF53633">
    <property type="entry name" value="Carbamate kinase-like"/>
    <property type="match status" value="1"/>
</dbReference>
<evidence type="ECO:0000255" key="1">
    <source>
        <dbReference type="HAMAP-Rule" id="MF_00082"/>
    </source>
</evidence>
<sequence>MTDPLSIAPRDQAEILARALPYIRRFHGKTMVIKYGGNAMTDPALQADFAEDVVLLKLVGMNPVVVHGGGPQIETALNRLGKKGVFIQGMRVTDAETMEVVEWVLAGQVQQDIVGLINQAGGKAVGLTGRDGAMIRAQKLKMVDSKDSSIEHDIGQVGDIVSIDPSVVKALQDDAFIPVISPIGFGENNESYNINADVVASKLATVLQAQKLVLLTNTPGVLDKKGNLLTDLTAREIDALFADGTISGGMLPKIAGALDAAKAGVHAVHIIDGRVPHAMLLEILTDQAFGTMIRSH</sequence>
<keyword id="KW-0028">Amino-acid biosynthesis</keyword>
<keyword id="KW-0055">Arginine biosynthesis</keyword>
<keyword id="KW-0067">ATP-binding</keyword>
<keyword id="KW-0963">Cytoplasm</keyword>
<keyword id="KW-0418">Kinase</keyword>
<keyword id="KW-0547">Nucleotide-binding</keyword>
<keyword id="KW-1185">Reference proteome</keyword>
<keyword id="KW-0808">Transferase</keyword>
<comment type="function">
    <text evidence="1">Catalyzes the ATP-dependent phosphorylation of N-acetyl-L-glutamate.</text>
</comment>
<comment type="catalytic activity">
    <reaction evidence="1">
        <text>N-acetyl-L-glutamate + ATP = N-acetyl-L-glutamyl 5-phosphate + ADP</text>
        <dbReference type="Rhea" id="RHEA:14629"/>
        <dbReference type="ChEBI" id="CHEBI:30616"/>
        <dbReference type="ChEBI" id="CHEBI:44337"/>
        <dbReference type="ChEBI" id="CHEBI:57936"/>
        <dbReference type="ChEBI" id="CHEBI:456216"/>
        <dbReference type="EC" id="2.7.2.8"/>
    </reaction>
</comment>
<comment type="pathway">
    <text evidence="1">Amino-acid biosynthesis; L-arginine biosynthesis; N(2)-acetyl-L-ornithine from L-glutamate: step 2/4.</text>
</comment>
<comment type="subcellular location">
    <subcellularLocation>
        <location evidence="1">Cytoplasm</location>
    </subcellularLocation>
</comment>
<comment type="similarity">
    <text evidence="1">Belongs to the acetylglutamate kinase family. ArgB subfamily.</text>
</comment>
<proteinExistence type="inferred from homology"/>
<protein>
    <recommendedName>
        <fullName evidence="1">Acetylglutamate kinase</fullName>
        <ecNumber evidence="1">2.7.2.8</ecNumber>
    </recommendedName>
    <alternativeName>
        <fullName evidence="1">N-acetyl-L-glutamate 5-phosphotransferase</fullName>
    </alternativeName>
    <alternativeName>
        <fullName evidence="1">NAG kinase</fullName>
        <shortName evidence="1">NAGK</shortName>
    </alternativeName>
</protein>